<organism>
    <name type="scientific">Azotobacter vinelandii (strain DJ / ATCC BAA-1303)</name>
    <dbReference type="NCBI Taxonomy" id="322710"/>
    <lineage>
        <taxon>Bacteria</taxon>
        <taxon>Pseudomonadati</taxon>
        <taxon>Pseudomonadota</taxon>
        <taxon>Gammaproteobacteria</taxon>
        <taxon>Pseudomonadales</taxon>
        <taxon>Pseudomonadaceae</taxon>
        <taxon>Azotobacter</taxon>
    </lineage>
</organism>
<evidence type="ECO:0000255" key="1">
    <source>
        <dbReference type="HAMAP-Rule" id="MF_00478"/>
    </source>
</evidence>
<evidence type="ECO:0000305" key="2"/>
<evidence type="ECO:0007829" key="3">
    <source>
        <dbReference type="PDB" id="8AHX"/>
    </source>
</evidence>
<gene>
    <name evidence="1" type="primary">rnfE</name>
    <name type="ordered locus">Avin_50930</name>
</gene>
<proteinExistence type="evidence at protein level"/>
<feature type="chain" id="PRO_0000214265" description="Ion-translocating oxidoreductase complex subunit E">
    <location>
        <begin position="1"/>
        <end position="238"/>
    </location>
</feature>
<feature type="transmembrane region" description="Helical" evidence="1">
    <location>
        <begin position="24"/>
        <end position="44"/>
    </location>
</feature>
<feature type="transmembrane region" description="Helical" evidence="1">
    <location>
        <begin position="52"/>
        <end position="72"/>
    </location>
</feature>
<feature type="transmembrane region" description="Helical" evidence="1">
    <location>
        <begin position="84"/>
        <end position="104"/>
    </location>
</feature>
<feature type="transmembrane region" description="Helical" evidence="1">
    <location>
        <begin position="106"/>
        <end position="126"/>
    </location>
</feature>
<feature type="transmembrane region" description="Helical" evidence="1">
    <location>
        <begin position="141"/>
        <end position="161"/>
    </location>
</feature>
<feature type="transmembrane region" description="Helical" evidence="1">
    <location>
        <begin position="195"/>
        <end position="215"/>
    </location>
</feature>
<feature type="sequence conflict" description="In Ref. 1; AAG29820." evidence="2" ref="1">
    <original>V</original>
    <variation>A</variation>
    <location>
        <position position="218"/>
    </location>
</feature>
<feature type="helix" evidence="3">
    <location>
        <begin position="18"/>
        <end position="26"/>
    </location>
</feature>
<feature type="turn" evidence="3">
    <location>
        <begin position="30"/>
        <end position="33"/>
    </location>
</feature>
<feature type="helix" evidence="3">
    <location>
        <begin position="38"/>
        <end position="43"/>
    </location>
</feature>
<feature type="helix" evidence="3">
    <location>
        <begin position="48"/>
        <end position="71"/>
    </location>
</feature>
<feature type="helix" evidence="3">
    <location>
        <begin position="73"/>
        <end position="75"/>
    </location>
</feature>
<feature type="helix" evidence="3">
    <location>
        <begin position="78"/>
        <end position="80"/>
    </location>
</feature>
<feature type="helix" evidence="3">
    <location>
        <begin position="81"/>
        <end position="100"/>
    </location>
</feature>
<feature type="helix" evidence="3">
    <location>
        <begin position="105"/>
        <end position="111"/>
    </location>
</feature>
<feature type="helix" evidence="3">
    <location>
        <begin position="113"/>
        <end position="116"/>
    </location>
</feature>
<feature type="turn" evidence="3">
    <location>
        <begin position="117"/>
        <end position="120"/>
    </location>
</feature>
<feature type="helix" evidence="3">
    <location>
        <begin position="122"/>
        <end position="130"/>
    </location>
</feature>
<feature type="turn" evidence="3">
    <location>
        <begin position="131"/>
        <end position="133"/>
    </location>
</feature>
<feature type="helix" evidence="3">
    <location>
        <begin position="137"/>
        <end position="167"/>
    </location>
</feature>
<feature type="strand" evidence="3">
    <location>
        <begin position="168"/>
        <end position="171"/>
    </location>
</feature>
<feature type="helix" evidence="3">
    <location>
        <begin position="174"/>
        <end position="178"/>
    </location>
</feature>
<feature type="helix" evidence="3">
    <location>
        <begin position="180"/>
        <end position="185"/>
    </location>
</feature>
<feature type="strand" evidence="3">
    <location>
        <begin position="190"/>
        <end position="192"/>
    </location>
</feature>
<feature type="helix" evidence="3">
    <location>
        <begin position="197"/>
        <end position="199"/>
    </location>
</feature>
<feature type="helix" evidence="3">
    <location>
        <begin position="203"/>
        <end position="227"/>
    </location>
</feature>
<reference key="1">
    <citation type="submission" date="2000-08" db="EMBL/GenBank/DDBJ databases">
        <title>Cloning and mutational analysis of the Azotobacter vinelandii gene encoding the dinitrogenase gamma subunit.</title>
        <authorList>
            <person name="Rubio L.M."/>
            <person name="Rangaraj P."/>
            <person name="Roberts G.P."/>
            <person name="Ludden P.W."/>
        </authorList>
    </citation>
    <scope>NUCLEOTIDE SEQUENCE [GENOMIC DNA]</scope>
</reference>
<reference key="2">
    <citation type="journal article" date="2009" name="J. Bacteriol.">
        <title>Genome sequence of Azotobacter vinelandii, an obligate aerobe specialized to support diverse anaerobic metabolic processes.</title>
        <authorList>
            <person name="Setubal J.C."/>
            <person name="Dos Santos P."/>
            <person name="Goldman B.S."/>
            <person name="Ertesvaag H."/>
            <person name="Espin G."/>
            <person name="Rubio L.M."/>
            <person name="Valla S."/>
            <person name="Almeida N.F."/>
            <person name="Balasubramanian D."/>
            <person name="Cromes L."/>
            <person name="Curatti L."/>
            <person name="Du Z."/>
            <person name="Godsy E."/>
            <person name="Goodner B."/>
            <person name="Hellner-Burris K."/>
            <person name="Hernandez J.A."/>
            <person name="Houmiel K."/>
            <person name="Imperial J."/>
            <person name="Kennedy C."/>
            <person name="Larson T.J."/>
            <person name="Latreille P."/>
            <person name="Ligon L.S."/>
            <person name="Lu J."/>
            <person name="Maerk M."/>
            <person name="Miller N.M."/>
            <person name="Norton S."/>
            <person name="O'Carroll I.P."/>
            <person name="Paulsen I."/>
            <person name="Raulfs E.C."/>
            <person name="Roemer R."/>
            <person name="Rosser J."/>
            <person name="Segura D."/>
            <person name="Slater S."/>
            <person name="Stricklin S.L."/>
            <person name="Studholme D.J."/>
            <person name="Sun J."/>
            <person name="Viana C.J."/>
            <person name="Wallin E."/>
            <person name="Wang B."/>
            <person name="Wheeler C."/>
            <person name="Zhu H."/>
            <person name="Dean D.R."/>
            <person name="Dixon R."/>
            <person name="Wood D."/>
        </authorList>
    </citation>
    <scope>NUCLEOTIDE SEQUENCE [LARGE SCALE GENOMIC DNA]</scope>
    <source>
        <strain>DJ / ATCC BAA-1303</strain>
    </source>
</reference>
<dbReference type="EC" id="7.-.-.-" evidence="1"/>
<dbReference type="EMBL" id="AF302049">
    <property type="protein sequence ID" value="AAG29820.1"/>
    <property type="molecule type" value="Genomic_DNA"/>
</dbReference>
<dbReference type="EMBL" id="CP001157">
    <property type="protein sequence ID" value="ACO81180.1"/>
    <property type="molecule type" value="Genomic_DNA"/>
</dbReference>
<dbReference type="RefSeq" id="WP_012703533.1">
    <property type="nucleotide sequence ID" value="NC_012560.1"/>
</dbReference>
<dbReference type="PDB" id="8AHX">
    <property type="method" value="EM"/>
    <property type="resolution" value="3.11 A"/>
    <property type="chains" value="E=1-238"/>
</dbReference>
<dbReference type="PDB" id="8RB8">
    <property type="method" value="EM"/>
    <property type="resolution" value="3.41 A"/>
    <property type="chains" value="E=1-238"/>
</dbReference>
<dbReference type="PDB" id="8RB9">
    <property type="method" value="EM"/>
    <property type="resolution" value="3.19 A"/>
    <property type="chains" value="E=1-238"/>
</dbReference>
<dbReference type="PDB" id="8RBM">
    <property type="method" value="EM"/>
    <property type="resolution" value="3.24 A"/>
    <property type="chains" value="E=1-238"/>
</dbReference>
<dbReference type="PDB" id="8RBQ">
    <property type="method" value="EM"/>
    <property type="resolution" value="3.32 A"/>
    <property type="chains" value="E=1-238"/>
</dbReference>
<dbReference type="PDBsum" id="8AHX"/>
<dbReference type="PDBsum" id="8RB8"/>
<dbReference type="PDBsum" id="8RB9"/>
<dbReference type="PDBsum" id="8RBM"/>
<dbReference type="PDBsum" id="8RBQ"/>
<dbReference type="EMDB" id="EMD-15452"/>
<dbReference type="EMDB" id="EMD-19028"/>
<dbReference type="EMDB" id="EMD-19029"/>
<dbReference type="EMDB" id="EMD-19032"/>
<dbReference type="EMDB" id="EMD-19034"/>
<dbReference type="SMR" id="Q9F5Y1"/>
<dbReference type="STRING" id="322710.Avin_50930"/>
<dbReference type="EnsemblBacteria" id="ACO81180">
    <property type="protein sequence ID" value="ACO81180"/>
    <property type="gene ID" value="Avin_50930"/>
</dbReference>
<dbReference type="GeneID" id="88187927"/>
<dbReference type="KEGG" id="avn:Avin_50930"/>
<dbReference type="eggNOG" id="COG4660">
    <property type="taxonomic scope" value="Bacteria"/>
</dbReference>
<dbReference type="HOGENOM" id="CLU_046659_1_0_6"/>
<dbReference type="OrthoDB" id="9782945at2"/>
<dbReference type="Proteomes" id="UP000002424">
    <property type="component" value="Chromosome"/>
</dbReference>
<dbReference type="GO" id="GO:0005886">
    <property type="term" value="C:plasma membrane"/>
    <property type="evidence" value="ECO:0007669"/>
    <property type="project" value="UniProtKB-SubCell"/>
</dbReference>
<dbReference type="GO" id="GO:0022900">
    <property type="term" value="P:electron transport chain"/>
    <property type="evidence" value="ECO:0007669"/>
    <property type="project" value="UniProtKB-UniRule"/>
</dbReference>
<dbReference type="HAMAP" id="MF_00478">
    <property type="entry name" value="RsxE_RnfE"/>
    <property type="match status" value="1"/>
</dbReference>
<dbReference type="InterPro" id="IPR003667">
    <property type="entry name" value="NqrDE/RnfAE"/>
</dbReference>
<dbReference type="InterPro" id="IPR010968">
    <property type="entry name" value="RnfE"/>
</dbReference>
<dbReference type="NCBIfam" id="NF009070">
    <property type="entry name" value="PRK12405.1"/>
    <property type="match status" value="1"/>
</dbReference>
<dbReference type="NCBIfam" id="TIGR01948">
    <property type="entry name" value="rnfE"/>
    <property type="match status" value="1"/>
</dbReference>
<dbReference type="PANTHER" id="PTHR30586">
    <property type="entry name" value="ELECTRON TRANSPORT COMPLEX PROTEIN RNFE"/>
    <property type="match status" value="1"/>
</dbReference>
<dbReference type="PANTHER" id="PTHR30586:SF0">
    <property type="entry name" value="ION-TRANSLOCATING OXIDOREDUCTASE COMPLEX SUBUNIT E"/>
    <property type="match status" value="1"/>
</dbReference>
<dbReference type="Pfam" id="PF02508">
    <property type="entry name" value="Rnf-Nqr"/>
    <property type="match status" value="1"/>
</dbReference>
<dbReference type="PIRSF" id="PIRSF006102">
    <property type="entry name" value="NQR_DE"/>
    <property type="match status" value="1"/>
</dbReference>
<keyword id="KW-0002">3D-structure</keyword>
<keyword id="KW-0997">Cell inner membrane</keyword>
<keyword id="KW-1003">Cell membrane</keyword>
<keyword id="KW-0249">Electron transport</keyword>
<keyword id="KW-0472">Membrane</keyword>
<keyword id="KW-1278">Translocase</keyword>
<keyword id="KW-0812">Transmembrane</keyword>
<keyword id="KW-1133">Transmembrane helix</keyword>
<keyword id="KW-0813">Transport</keyword>
<accession>Q9F5Y1</accession>
<accession>C1DMA3</accession>
<comment type="function">
    <text evidence="1">Part of a membrane-bound complex that couples electron transfer with translocation of ions across the membrane.</text>
</comment>
<comment type="subunit">
    <text evidence="1">The complex is composed of six subunits: RnfA, RnfB, RnfC, RnfD, RnfE and RnfG.</text>
</comment>
<comment type="subcellular location">
    <subcellularLocation>
        <location evidence="1">Cell inner membrane</location>
        <topology evidence="1">Multi-pass membrane protein</topology>
    </subcellularLocation>
</comment>
<comment type="similarity">
    <text evidence="1">Belongs to the NqrDE/RnfAE family.</text>
</comment>
<name>RNFE_AZOVD</name>
<protein>
    <recommendedName>
        <fullName evidence="1">Ion-translocating oxidoreductase complex subunit E</fullName>
        <ecNumber evidence="1">7.-.-.-</ecNumber>
    </recommendedName>
    <alternativeName>
        <fullName evidence="1">Rnf electron transport complex subunit E</fullName>
    </alternativeName>
</protein>
<sequence>MSHCGAPSVPEPEKKVPWQYFTSALWQYNVALVQMLALCPTLAVTTTATNGLGMGLATTLVLVMTNALISSMRHTISPEVRNPVMIGVIAGVVTLTDMAMNAWMHELYKVLGLFIALIVTNCAVLGRAESFCLRNPVIPSILDGAGMGAGFTAVLVVIGGIREILGSGTLFSQASSLLGSHFKWMEITVIPDFQGILLAILPPGAFIVLGFLLAAKRVIDRKRAERRQQTHGELVVLQ</sequence>